<reference key="1">
    <citation type="journal article" date="2011" name="Genome Biol.">
        <title>Comparative and functional genomics provide insights into the pathogenicity of dermatophytic fungi.</title>
        <authorList>
            <person name="Burmester A."/>
            <person name="Shelest E."/>
            <person name="Gloeckner G."/>
            <person name="Heddergott C."/>
            <person name="Schindler S."/>
            <person name="Staib P."/>
            <person name="Heidel A."/>
            <person name="Felder M."/>
            <person name="Petzold A."/>
            <person name="Szafranski K."/>
            <person name="Feuermann M."/>
            <person name="Pedruzzi I."/>
            <person name="Priebe S."/>
            <person name="Groth M."/>
            <person name="Winkler R."/>
            <person name="Li W."/>
            <person name="Kniemeyer O."/>
            <person name="Schroeckh V."/>
            <person name="Hertweck C."/>
            <person name="Hube B."/>
            <person name="White T.C."/>
            <person name="Platzer M."/>
            <person name="Guthke R."/>
            <person name="Heitman J."/>
            <person name="Woestemeyer J."/>
            <person name="Zipfel P.F."/>
            <person name="Monod M."/>
            <person name="Brakhage A.A."/>
        </authorList>
    </citation>
    <scope>NUCLEOTIDE SEQUENCE [LARGE SCALE GENOMIC DNA]</scope>
    <source>
        <strain>ATCC MYA-4681 / CBS 112371</strain>
    </source>
</reference>
<organism>
    <name type="scientific">Arthroderma benhamiae (strain ATCC MYA-4681 / CBS 112371)</name>
    <name type="common">Trichophyton mentagrophytes</name>
    <dbReference type="NCBI Taxonomy" id="663331"/>
    <lineage>
        <taxon>Eukaryota</taxon>
        <taxon>Fungi</taxon>
        <taxon>Dikarya</taxon>
        <taxon>Ascomycota</taxon>
        <taxon>Pezizomycotina</taxon>
        <taxon>Eurotiomycetes</taxon>
        <taxon>Eurotiomycetidae</taxon>
        <taxon>Onygenales</taxon>
        <taxon>Arthrodermataceae</taxon>
        <taxon>Trichophyton</taxon>
    </lineage>
</organism>
<dbReference type="EC" id="2.4.1.142" evidence="1"/>
<dbReference type="EMBL" id="ABSU01000020">
    <property type="protein sequence ID" value="EFE31651.1"/>
    <property type="molecule type" value="Genomic_DNA"/>
</dbReference>
<dbReference type="RefSeq" id="XP_003012291.1">
    <property type="nucleotide sequence ID" value="XM_003012245.1"/>
</dbReference>
<dbReference type="SMR" id="D4AZD1"/>
<dbReference type="STRING" id="663331.D4AZD1"/>
<dbReference type="GeneID" id="9519940"/>
<dbReference type="KEGG" id="abe:ARB_01551"/>
<dbReference type="eggNOG" id="KOG2941">
    <property type="taxonomic scope" value="Eukaryota"/>
</dbReference>
<dbReference type="HOGENOM" id="CLU_012079_1_0_1"/>
<dbReference type="OMA" id="CWLCARI"/>
<dbReference type="UniPathway" id="UPA00378"/>
<dbReference type="Proteomes" id="UP000008866">
    <property type="component" value="Unassembled WGS sequence"/>
</dbReference>
<dbReference type="GO" id="GO:0005789">
    <property type="term" value="C:endoplasmic reticulum membrane"/>
    <property type="evidence" value="ECO:0007669"/>
    <property type="project" value="UniProtKB-SubCell"/>
</dbReference>
<dbReference type="GO" id="GO:0004578">
    <property type="term" value="F:chitobiosyldiphosphodolichol beta-mannosyltransferase activity"/>
    <property type="evidence" value="ECO:0007669"/>
    <property type="project" value="UniProtKB-EC"/>
</dbReference>
<dbReference type="GO" id="GO:0006486">
    <property type="term" value="P:protein glycosylation"/>
    <property type="evidence" value="ECO:0007669"/>
    <property type="project" value="UniProtKB-UniPathway"/>
</dbReference>
<dbReference type="CDD" id="cd03816">
    <property type="entry name" value="GT33_ALG1-like"/>
    <property type="match status" value="1"/>
</dbReference>
<dbReference type="FunFam" id="3.40.50.2000:FF:000162">
    <property type="entry name" value="Beta-1,4-mannosyltransferase (Alg1), putative"/>
    <property type="match status" value="1"/>
</dbReference>
<dbReference type="Gene3D" id="3.40.50.2000">
    <property type="entry name" value="Glycogen Phosphorylase B"/>
    <property type="match status" value="1"/>
</dbReference>
<dbReference type="InterPro" id="IPR026051">
    <property type="entry name" value="ALG1-like"/>
</dbReference>
<dbReference type="InterPro" id="IPR028098">
    <property type="entry name" value="Glyco_trans_4-like_N"/>
</dbReference>
<dbReference type="PANTHER" id="PTHR13036">
    <property type="entry name" value="BETA1,4 MANNOSYLTRANSFERASE"/>
    <property type="match status" value="1"/>
</dbReference>
<dbReference type="PANTHER" id="PTHR13036:SF0">
    <property type="entry name" value="CHITOBIOSYLDIPHOSPHODOLICHOL BETA-MANNOSYLTRANSFERASE"/>
    <property type="match status" value="1"/>
</dbReference>
<dbReference type="Pfam" id="PF13692">
    <property type="entry name" value="Glyco_trans_1_4"/>
    <property type="match status" value="1"/>
</dbReference>
<dbReference type="Pfam" id="PF13579">
    <property type="entry name" value="Glyco_trans_4_4"/>
    <property type="match status" value="1"/>
</dbReference>
<dbReference type="SUPFAM" id="SSF53756">
    <property type="entry name" value="UDP-Glycosyltransferase/glycogen phosphorylase"/>
    <property type="match status" value="1"/>
</dbReference>
<proteinExistence type="inferred from homology"/>
<comment type="function">
    <text evidence="1">Participates in the formation of the lipid-linked precursor oligosaccharide for N-glycosylation. Involved in assembling the dolichol-pyrophosphate-GlcNAc(2)-Man(5) intermediate on the cytoplasmic surface of the ER.</text>
</comment>
<comment type="catalytic activity">
    <reaction evidence="1">
        <text>an N,N'-diacetylchitobiosyl-diphospho-di-trans,poly-cis-dolichol + GDP-alpha-D-mannose = a beta-D-Man-(1-&gt;4)-beta-D-GlcNAc-(1-&gt;4)-alpha-D-GlcNAc-diphospho-di-trans,poly-cis-dolichol + GDP + H(+)</text>
        <dbReference type="Rhea" id="RHEA:13865"/>
        <dbReference type="Rhea" id="RHEA-COMP:19510"/>
        <dbReference type="Rhea" id="RHEA-COMP:19511"/>
        <dbReference type="ChEBI" id="CHEBI:15378"/>
        <dbReference type="ChEBI" id="CHEBI:57269"/>
        <dbReference type="ChEBI" id="CHEBI:57527"/>
        <dbReference type="ChEBI" id="CHEBI:58189"/>
        <dbReference type="ChEBI" id="CHEBI:58472"/>
        <dbReference type="EC" id="2.4.1.142"/>
    </reaction>
</comment>
<comment type="pathway">
    <text evidence="1">Protein modification; protein glycosylation.</text>
</comment>
<comment type="subcellular location">
    <subcellularLocation>
        <location evidence="3">Endoplasmic reticulum membrane</location>
        <topology evidence="3">Single-pass type II membrane protein</topology>
    </subcellularLocation>
</comment>
<comment type="similarity">
    <text evidence="3">Belongs to the glycosyltransferase group 1 family. Glycosyltransferase 33 subfamily.</text>
</comment>
<protein>
    <recommendedName>
        <fullName evidence="1">Chitobiosyldiphosphodolichol beta-mannosyltransferase</fullName>
        <ecNumber evidence="1">2.4.1.142</ecNumber>
    </recommendedName>
</protein>
<name>ALG1_ARTBC</name>
<evidence type="ECO:0000250" key="1">
    <source>
        <dbReference type="UniProtKB" id="Q9BT22"/>
    </source>
</evidence>
<evidence type="ECO:0000255" key="2"/>
<evidence type="ECO:0000305" key="3"/>
<sequence length="447" mass="49105">MTLVLLLSIFAICFSSVAFIQLLPTRREKKSSEAHDAVSVQIDTIVCLLRPPRSSSNSPTLNRVADSTPNQELLDHPLISIVALPSPPALLQTKKKFLFPVAAILKVLQQAWHLWAALGYRTGPAHWILVQNPPAAPTLALALLACHLRHSRLIIDWHNFGYSILALKLGSGHPMVKLMEWYEKAFSCYATAHFCVSNAMARILREQFEIKKPLMVLHDRPSSAFSPIFDEKQRLAILSSIPETSQSAIDIIEGRCRLLVSSTSWTPDEDFSLLLDALCRYSTSAKSSGLPSVPLLVIITGKGPLKDMYLSQIDKLKAEGKLFNVFIKTAWLSFEDYAQLLACATLGVCLHTSSSGVDLPMKVVDMFGAGLPVVGWDQYEAWPELVTEGVTGLGFDSADRLSGLLKSVLGGDGSALKVLREGAVKESRNRWDQTWDPIAGTFLGLVT</sequence>
<feature type="chain" id="PRO_0000434499" description="Chitobiosyldiphosphodolichol beta-mannosyltransferase" evidence="2">
    <location>
        <begin position="1"/>
        <end position="447"/>
    </location>
</feature>
<feature type="topological domain" description="Cytoplasmic" evidence="2">
    <location>
        <begin position="1"/>
        <end position="2"/>
    </location>
</feature>
<feature type="transmembrane region" description="Helical; Signal-anchor for type II membrane protein" evidence="2">
    <location>
        <begin position="3"/>
        <end position="23"/>
    </location>
</feature>
<feature type="topological domain" description="Lumenal" evidence="2">
    <location>
        <begin position="24"/>
        <end position="447"/>
    </location>
</feature>
<gene>
    <name type="ORF">ARB_01551</name>
</gene>
<accession>D4AZD1</accession>
<keyword id="KW-0256">Endoplasmic reticulum</keyword>
<keyword id="KW-0328">Glycosyltransferase</keyword>
<keyword id="KW-0472">Membrane</keyword>
<keyword id="KW-1185">Reference proteome</keyword>
<keyword id="KW-0735">Signal-anchor</keyword>
<keyword id="KW-0808">Transferase</keyword>
<keyword id="KW-0812">Transmembrane</keyword>
<keyword id="KW-1133">Transmembrane helix</keyword>